<proteinExistence type="inferred from homology"/>
<feature type="chain" id="PRO_0000136185" description="Histidine--tRNA ligase">
    <location>
        <begin position="1"/>
        <end position="439"/>
    </location>
</feature>
<organism>
    <name type="scientific">Leptospira interrogans serogroup Icterohaemorrhagiae serovar Lai (strain 56601)</name>
    <dbReference type="NCBI Taxonomy" id="189518"/>
    <lineage>
        <taxon>Bacteria</taxon>
        <taxon>Pseudomonadati</taxon>
        <taxon>Spirochaetota</taxon>
        <taxon>Spirochaetia</taxon>
        <taxon>Leptospirales</taxon>
        <taxon>Leptospiraceae</taxon>
        <taxon>Leptospira</taxon>
    </lineage>
</organism>
<reference key="1">
    <citation type="journal article" date="2003" name="Nature">
        <title>Unique physiological and pathogenic features of Leptospira interrogans revealed by whole-genome sequencing.</title>
        <authorList>
            <person name="Ren S.-X."/>
            <person name="Fu G."/>
            <person name="Jiang X.-G."/>
            <person name="Zeng R."/>
            <person name="Miao Y.-G."/>
            <person name="Xu H."/>
            <person name="Zhang Y.-X."/>
            <person name="Xiong H."/>
            <person name="Lu G."/>
            <person name="Lu L.-F."/>
            <person name="Jiang H.-Q."/>
            <person name="Jia J."/>
            <person name="Tu Y.-F."/>
            <person name="Jiang J.-X."/>
            <person name="Gu W.-Y."/>
            <person name="Zhang Y.-Q."/>
            <person name="Cai Z."/>
            <person name="Sheng H.-H."/>
            <person name="Yin H.-F."/>
            <person name="Zhang Y."/>
            <person name="Zhu G.-F."/>
            <person name="Wan M."/>
            <person name="Huang H.-L."/>
            <person name="Qian Z."/>
            <person name="Wang S.-Y."/>
            <person name="Ma W."/>
            <person name="Yao Z.-J."/>
            <person name="Shen Y."/>
            <person name="Qiang B.-Q."/>
            <person name="Xia Q.-C."/>
            <person name="Guo X.-K."/>
            <person name="Danchin A."/>
            <person name="Saint Girons I."/>
            <person name="Somerville R.L."/>
            <person name="Wen Y.-M."/>
            <person name="Shi M.-H."/>
            <person name="Chen Z."/>
            <person name="Xu J.-G."/>
            <person name="Zhao G.-P."/>
        </authorList>
    </citation>
    <scope>NUCLEOTIDE SEQUENCE [LARGE SCALE GENOMIC DNA]</scope>
    <source>
        <strain>56601</strain>
    </source>
</reference>
<comment type="catalytic activity">
    <reaction>
        <text>tRNA(His) + L-histidine + ATP = L-histidyl-tRNA(His) + AMP + diphosphate + H(+)</text>
        <dbReference type="Rhea" id="RHEA:17313"/>
        <dbReference type="Rhea" id="RHEA-COMP:9665"/>
        <dbReference type="Rhea" id="RHEA-COMP:9689"/>
        <dbReference type="ChEBI" id="CHEBI:15378"/>
        <dbReference type="ChEBI" id="CHEBI:30616"/>
        <dbReference type="ChEBI" id="CHEBI:33019"/>
        <dbReference type="ChEBI" id="CHEBI:57595"/>
        <dbReference type="ChEBI" id="CHEBI:78442"/>
        <dbReference type="ChEBI" id="CHEBI:78527"/>
        <dbReference type="ChEBI" id="CHEBI:456215"/>
        <dbReference type="EC" id="6.1.1.21"/>
    </reaction>
</comment>
<comment type="subunit">
    <text evidence="1">Homodimer.</text>
</comment>
<comment type="subcellular location">
    <subcellularLocation>
        <location evidence="1">Cytoplasm</location>
    </subcellularLocation>
</comment>
<comment type="similarity">
    <text evidence="2">Belongs to the class-II aminoacyl-tRNA synthetase family.</text>
</comment>
<name>SYH_LEPIN</name>
<evidence type="ECO:0000250" key="1"/>
<evidence type="ECO:0000305" key="2"/>
<protein>
    <recommendedName>
        <fullName>Histidine--tRNA ligase</fullName>
        <ecNumber>6.1.1.21</ecNumber>
    </recommendedName>
    <alternativeName>
        <fullName>Histidyl-tRNA synthetase</fullName>
        <shortName>HisRS</shortName>
    </alternativeName>
</protein>
<accession>Q8F9Y3</accession>
<keyword id="KW-0030">Aminoacyl-tRNA synthetase</keyword>
<keyword id="KW-0067">ATP-binding</keyword>
<keyword id="KW-0963">Cytoplasm</keyword>
<keyword id="KW-0436">Ligase</keyword>
<keyword id="KW-0547">Nucleotide-binding</keyword>
<keyword id="KW-0648">Protein biosynthesis</keyword>
<keyword id="KW-1185">Reference proteome</keyword>
<sequence>MENQKNFLTTAPYKGTRDFYPEDMRLRNWMFSVMRETVLSFGYEEYDGPILESFDLYKAKSGEEIVERQLYDFIDKGERRVAIRPEMTPTLARMVAGNLRNLPKPVRWFSIPNLWRYEQPGKGRLREHWQLNVDLFGVDSHRAELEILLIADSILKKFGAPIGSYQIKVSHRKLLDSFLKNSLKLNGDQVHGVSKLLDKKSKISPEAFETEMKPFLNNFKEQFSLIETYLNSNLETVSKIPGIDTNSVSFIQNLFQELGELGIDKQLLFDPSIIRGFDYYTGCIFEVFDTNPENRRSLYGGGRYDNLIGLFSKEQLSGIGFGLGDVTLKNFLEGHNLIPNLSREKTIFLPIMDESLFVDTFKLSKELRENEILTETMLDSAKIGKQIQIAEKKGYRYVLFLGESEIRTETVQIKDLISGEQKSLPRKGLSDTLKKDFQL</sequence>
<gene>
    <name type="primary">hisS</name>
    <name type="ordered locus">LA_0054</name>
</gene>
<dbReference type="EC" id="6.1.1.21"/>
<dbReference type="EMBL" id="AE010300">
    <property type="protein sequence ID" value="AAN47253.1"/>
    <property type="molecule type" value="Genomic_DNA"/>
</dbReference>
<dbReference type="RefSeq" id="NP_710235.1">
    <property type="nucleotide sequence ID" value="NC_004342.2"/>
</dbReference>
<dbReference type="RefSeq" id="WP_000431277.1">
    <property type="nucleotide sequence ID" value="NC_004342.2"/>
</dbReference>
<dbReference type="SMR" id="Q8F9Y3"/>
<dbReference type="FunCoup" id="Q8F9Y3">
    <property type="interactions" value="468"/>
</dbReference>
<dbReference type="STRING" id="189518.LA_0054"/>
<dbReference type="PaxDb" id="189518-LA_0054"/>
<dbReference type="EnsemblBacteria" id="AAN47253">
    <property type="protein sequence ID" value="AAN47253"/>
    <property type="gene ID" value="LA_0054"/>
</dbReference>
<dbReference type="KEGG" id="lil:LA_0054"/>
<dbReference type="PATRIC" id="fig|189518.3.peg.58"/>
<dbReference type="HOGENOM" id="CLU_025113_3_1_12"/>
<dbReference type="InParanoid" id="Q8F9Y3"/>
<dbReference type="OrthoDB" id="9800814at2"/>
<dbReference type="Proteomes" id="UP000001408">
    <property type="component" value="Chromosome I"/>
</dbReference>
<dbReference type="GO" id="GO:0005737">
    <property type="term" value="C:cytoplasm"/>
    <property type="evidence" value="ECO:0007669"/>
    <property type="project" value="UniProtKB-SubCell"/>
</dbReference>
<dbReference type="GO" id="GO:0005524">
    <property type="term" value="F:ATP binding"/>
    <property type="evidence" value="ECO:0007669"/>
    <property type="project" value="UniProtKB-UniRule"/>
</dbReference>
<dbReference type="GO" id="GO:0004821">
    <property type="term" value="F:histidine-tRNA ligase activity"/>
    <property type="evidence" value="ECO:0000318"/>
    <property type="project" value="GO_Central"/>
</dbReference>
<dbReference type="GO" id="GO:0006427">
    <property type="term" value="P:histidyl-tRNA aminoacylation"/>
    <property type="evidence" value="ECO:0000318"/>
    <property type="project" value="GO_Central"/>
</dbReference>
<dbReference type="CDD" id="cd00773">
    <property type="entry name" value="HisRS-like_core"/>
    <property type="match status" value="1"/>
</dbReference>
<dbReference type="CDD" id="cd00859">
    <property type="entry name" value="HisRS_anticodon"/>
    <property type="match status" value="1"/>
</dbReference>
<dbReference type="FunFam" id="3.30.930.10:FF:000122">
    <property type="entry name" value="Histidine--tRNA ligase"/>
    <property type="match status" value="1"/>
</dbReference>
<dbReference type="FunFam" id="3.40.50.800:FF:000041">
    <property type="entry name" value="Histidine--tRNA ligase"/>
    <property type="match status" value="1"/>
</dbReference>
<dbReference type="Gene3D" id="3.40.50.800">
    <property type="entry name" value="Anticodon-binding domain"/>
    <property type="match status" value="1"/>
</dbReference>
<dbReference type="Gene3D" id="3.30.930.10">
    <property type="entry name" value="Bira Bifunctional Protein, Domain 2"/>
    <property type="match status" value="1"/>
</dbReference>
<dbReference type="HAMAP" id="MF_00127">
    <property type="entry name" value="His_tRNA_synth"/>
    <property type="match status" value="1"/>
</dbReference>
<dbReference type="InterPro" id="IPR006195">
    <property type="entry name" value="aa-tRNA-synth_II"/>
</dbReference>
<dbReference type="InterPro" id="IPR045864">
    <property type="entry name" value="aa-tRNA-synth_II/BPL/LPL"/>
</dbReference>
<dbReference type="InterPro" id="IPR004154">
    <property type="entry name" value="Anticodon-bd"/>
</dbReference>
<dbReference type="InterPro" id="IPR036621">
    <property type="entry name" value="Anticodon-bd_dom_sf"/>
</dbReference>
<dbReference type="InterPro" id="IPR015807">
    <property type="entry name" value="His-tRNA-ligase"/>
</dbReference>
<dbReference type="InterPro" id="IPR041715">
    <property type="entry name" value="HisRS-like_core"/>
</dbReference>
<dbReference type="InterPro" id="IPR004516">
    <property type="entry name" value="HisRS/HisZ"/>
</dbReference>
<dbReference type="InterPro" id="IPR033656">
    <property type="entry name" value="HisRS_anticodon"/>
</dbReference>
<dbReference type="NCBIfam" id="TIGR00442">
    <property type="entry name" value="hisS"/>
    <property type="match status" value="1"/>
</dbReference>
<dbReference type="PANTHER" id="PTHR43707:SF1">
    <property type="entry name" value="HISTIDINE--TRNA LIGASE, MITOCHONDRIAL-RELATED"/>
    <property type="match status" value="1"/>
</dbReference>
<dbReference type="PANTHER" id="PTHR43707">
    <property type="entry name" value="HISTIDYL-TRNA SYNTHETASE"/>
    <property type="match status" value="1"/>
</dbReference>
<dbReference type="Pfam" id="PF03129">
    <property type="entry name" value="HGTP_anticodon"/>
    <property type="match status" value="1"/>
</dbReference>
<dbReference type="Pfam" id="PF13393">
    <property type="entry name" value="tRNA-synt_His"/>
    <property type="match status" value="1"/>
</dbReference>
<dbReference type="PIRSF" id="PIRSF001549">
    <property type="entry name" value="His-tRNA_synth"/>
    <property type="match status" value="1"/>
</dbReference>
<dbReference type="SUPFAM" id="SSF52954">
    <property type="entry name" value="Class II aaRS ABD-related"/>
    <property type="match status" value="1"/>
</dbReference>
<dbReference type="SUPFAM" id="SSF55681">
    <property type="entry name" value="Class II aaRS and biotin synthetases"/>
    <property type="match status" value="1"/>
</dbReference>
<dbReference type="PROSITE" id="PS50862">
    <property type="entry name" value="AA_TRNA_LIGASE_II"/>
    <property type="match status" value="1"/>
</dbReference>